<organism>
    <name type="scientific">Limosilactobacillus fermentum (strain NBRC 3956 / LMG 18251)</name>
    <name type="common">Lactobacillus fermentum</name>
    <dbReference type="NCBI Taxonomy" id="334390"/>
    <lineage>
        <taxon>Bacteria</taxon>
        <taxon>Bacillati</taxon>
        <taxon>Bacillota</taxon>
        <taxon>Bacilli</taxon>
        <taxon>Lactobacillales</taxon>
        <taxon>Lactobacillaceae</taxon>
        <taxon>Limosilactobacillus</taxon>
    </lineage>
</organism>
<accession>B2GF74</accession>
<protein>
    <recommendedName>
        <fullName evidence="1">Phosphoribosylformylglycinamidine synthase subunit PurL</fullName>
        <shortName evidence="1">FGAM synthase</shortName>
        <ecNumber evidence="1">6.3.5.3</ecNumber>
    </recommendedName>
    <alternativeName>
        <fullName evidence="1">Formylglycinamide ribonucleotide amidotransferase subunit II</fullName>
        <shortName evidence="1">FGAR amidotransferase II</shortName>
        <shortName evidence="1">FGAR-AT II</shortName>
    </alternativeName>
    <alternativeName>
        <fullName evidence="1">Glutamine amidotransferase PurL</fullName>
    </alternativeName>
    <alternativeName>
        <fullName evidence="1">Phosphoribosylformylglycinamidine synthase subunit II</fullName>
    </alternativeName>
</protein>
<name>PURL_LIMF3</name>
<proteinExistence type="inferred from homology"/>
<feature type="chain" id="PRO_1000194826" description="Phosphoribosylformylglycinamidine synthase subunit PurL">
    <location>
        <begin position="1"/>
        <end position="741"/>
    </location>
</feature>
<feature type="active site" evidence="1">
    <location>
        <position position="53"/>
    </location>
</feature>
<feature type="active site" description="Proton acceptor" evidence="1">
    <location>
        <position position="99"/>
    </location>
</feature>
<feature type="binding site" evidence="1">
    <location>
        <position position="56"/>
    </location>
    <ligand>
        <name>ATP</name>
        <dbReference type="ChEBI" id="CHEBI:30616"/>
    </ligand>
</feature>
<feature type="binding site" evidence="1">
    <location>
        <position position="95"/>
    </location>
    <ligand>
        <name>ATP</name>
        <dbReference type="ChEBI" id="CHEBI:30616"/>
    </ligand>
</feature>
<feature type="binding site" evidence="1">
    <location>
        <position position="97"/>
    </location>
    <ligand>
        <name>Mg(2+)</name>
        <dbReference type="ChEBI" id="CHEBI:18420"/>
        <label>1</label>
    </ligand>
</feature>
<feature type="binding site" evidence="1">
    <location>
        <begin position="98"/>
        <end position="101"/>
    </location>
    <ligand>
        <name>substrate</name>
    </ligand>
</feature>
<feature type="binding site" evidence="1">
    <location>
        <position position="120"/>
    </location>
    <ligand>
        <name>substrate</name>
    </ligand>
</feature>
<feature type="binding site" evidence="1">
    <location>
        <position position="121"/>
    </location>
    <ligand>
        <name>Mg(2+)</name>
        <dbReference type="ChEBI" id="CHEBI:18420"/>
        <label>2</label>
    </ligand>
</feature>
<feature type="binding site" evidence="1">
    <location>
        <position position="244"/>
    </location>
    <ligand>
        <name>substrate</name>
    </ligand>
</feature>
<feature type="binding site" evidence="1">
    <location>
        <position position="274"/>
    </location>
    <ligand>
        <name>Mg(2+)</name>
        <dbReference type="ChEBI" id="CHEBI:18420"/>
        <label>2</label>
    </ligand>
</feature>
<feature type="binding site" evidence="1">
    <location>
        <begin position="318"/>
        <end position="320"/>
    </location>
    <ligand>
        <name>substrate</name>
    </ligand>
</feature>
<feature type="binding site" evidence="1">
    <location>
        <position position="501"/>
    </location>
    <ligand>
        <name>ATP</name>
        <dbReference type="ChEBI" id="CHEBI:30616"/>
    </ligand>
</feature>
<feature type="binding site" evidence="1">
    <location>
        <position position="538"/>
    </location>
    <ligand>
        <name>ATP</name>
        <dbReference type="ChEBI" id="CHEBI:30616"/>
    </ligand>
</feature>
<feature type="binding site" evidence="1">
    <location>
        <position position="539"/>
    </location>
    <ligand>
        <name>Mg(2+)</name>
        <dbReference type="ChEBI" id="CHEBI:18420"/>
        <label>1</label>
    </ligand>
</feature>
<feature type="binding site" evidence="1">
    <location>
        <position position="541"/>
    </location>
    <ligand>
        <name>substrate</name>
    </ligand>
</feature>
<comment type="function">
    <text evidence="1">Part of the phosphoribosylformylglycinamidine synthase complex involved in the purines biosynthetic pathway. Catalyzes the ATP-dependent conversion of formylglycinamide ribonucleotide (FGAR) and glutamine to yield formylglycinamidine ribonucleotide (FGAM) and glutamate. The FGAM synthase complex is composed of three subunits. PurQ produces an ammonia molecule by converting glutamine to glutamate. PurL transfers the ammonia molecule to FGAR to form FGAM in an ATP-dependent manner. PurS interacts with PurQ and PurL and is thought to assist in the transfer of the ammonia molecule from PurQ to PurL.</text>
</comment>
<comment type="catalytic activity">
    <reaction evidence="1">
        <text>N(2)-formyl-N(1)-(5-phospho-beta-D-ribosyl)glycinamide + L-glutamine + ATP + H2O = 2-formamido-N(1)-(5-O-phospho-beta-D-ribosyl)acetamidine + L-glutamate + ADP + phosphate + H(+)</text>
        <dbReference type="Rhea" id="RHEA:17129"/>
        <dbReference type="ChEBI" id="CHEBI:15377"/>
        <dbReference type="ChEBI" id="CHEBI:15378"/>
        <dbReference type="ChEBI" id="CHEBI:29985"/>
        <dbReference type="ChEBI" id="CHEBI:30616"/>
        <dbReference type="ChEBI" id="CHEBI:43474"/>
        <dbReference type="ChEBI" id="CHEBI:58359"/>
        <dbReference type="ChEBI" id="CHEBI:147286"/>
        <dbReference type="ChEBI" id="CHEBI:147287"/>
        <dbReference type="ChEBI" id="CHEBI:456216"/>
        <dbReference type="EC" id="6.3.5.3"/>
    </reaction>
</comment>
<comment type="pathway">
    <text evidence="1">Purine metabolism; IMP biosynthesis via de novo pathway; 5-amino-1-(5-phospho-D-ribosyl)imidazole from N(2)-formyl-N(1)-(5-phospho-D-ribosyl)glycinamide: step 1/2.</text>
</comment>
<comment type="subunit">
    <text evidence="1">Monomer. Part of the FGAM synthase complex composed of 1 PurL, 1 PurQ and 2 PurS subunits.</text>
</comment>
<comment type="subcellular location">
    <subcellularLocation>
        <location evidence="1">Cytoplasm</location>
    </subcellularLocation>
</comment>
<comment type="similarity">
    <text evidence="1">Belongs to the FGAMS family.</text>
</comment>
<evidence type="ECO:0000255" key="1">
    <source>
        <dbReference type="HAMAP-Rule" id="MF_00420"/>
    </source>
</evidence>
<reference key="1">
    <citation type="journal article" date="2008" name="DNA Res.">
        <title>Comparative genome analysis of Lactobacillus reuteri and Lactobacillus fermentum reveal a genomic island for reuterin and cobalamin production.</title>
        <authorList>
            <person name="Morita H."/>
            <person name="Toh H."/>
            <person name="Fukuda S."/>
            <person name="Horikawa H."/>
            <person name="Oshima K."/>
            <person name="Suzuki T."/>
            <person name="Murakami M."/>
            <person name="Hisamatsu S."/>
            <person name="Kato Y."/>
            <person name="Takizawa T."/>
            <person name="Fukuoka H."/>
            <person name="Yoshimura T."/>
            <person name="Itoh K."/>
            <person name="O'Sullivan D.J."/>
            <person name="McKay L.L."/>
            <person name="Ohno H."/>
            <person name="Kikuchi J."/>
            <person name="Masaoka T."/>
            <person name="Hattori M."/>
        </authorList>
    </citation>
    <scope>NUCLEOTIDE SEQUENCE [LARGE SCALE GENOMIC DNA]</scope>
    <source>
        <strain>NBRC 3956 / LMG 18251</strain>
    </source>
</reference>
<gene>
    <name evidence="1" type="primary">purL</name>
    <name type="ordered locus">LAF_0127</name>
</gene>
<dbReference type="EC" id="6.3.5.3" evidence="1"/>
<dbReference type="EMBL" id="AP008937">
    <property type="protein sequence ID" value="BAG26463.1"/>
    <property type="molecule type" value="Genomic_DNA"/>
</dbReference>
<dbReference type="RefSeq" id="WP_012390751.1">
    <property type="nucleotide sequence ID" value="NC_010610.1"/>
</dbReference>
<dbReference type="SMR" id="B2GF74"/>
<dbReference type="KEGG" id="lfe:LAF_0127"/>
<dbReference type="PATRIC" id="fig|334390.5.peg.133"/>
<dbReference type="eggNOG" id="COG0046">
    <property type="taxonomic scope" value="Bacteria"/>
</dbReference>
<dbReference type="HOGENOM" id="CLU_003100_0_1_9"/>
<dbReference type="UniPathway" id="UPA00074">
    <property type="reaction ID" value="UER00128"/>
</dbReference>
<dbReference type="Proteomes" id="UP000001697">
    <property type="component" value="Chromosome"/>
</dbReference>
<dbReference type="GO" id="GO:0005737">
    <property type="term" value="C:cytoplasm"/>
    <property type="evidence" value="ECO:0007669"/>
    <property type="project" value="UniProtKB-SubCell"/>
</dbReference>
<dbReference type="GO" id="GO:0005524">
    <property type="term" value="F:ATP binding"/>
    <property type="evidence" value="ECO:0007669"/>
    <property type="project" value="UniProtKB-UniRule"/>
</dbReference>
<dbReference type="GO" id="GO:0000287">
    <property type="term" value="F:magnesium ion binding"/>
    <property type="evidence" value="ECO:0007669"/>
    <property type="project" value="UniProtKB-UniRule"/>
</dbReference>
<dbReference type="GO" id="GO:0004642">
    <property type="term" value="F:phosphoribosylformylglycinamidine synthase activity"/>
    <property type="evidence" value="ECO:0007669"/>
    <property type="project" value="UniProtKB-UniRule"/>
</dbReference>
<dbReference type="GO" id="GO:0006189">
    <property type="term" value="P:'de novo' IMP biosynthetic process"/>
    <property type="evidence" value="ECO:0007669"/>
    <property type="project" value="UniProtKB-UniRule"/>
</dbReference>
<dbReference type="CDD" id="cd02203">
    <property type="entry name" value="PurL_repeat1"/>
    <property type="match status" value="1"/>
</dbReference>
<dbReference type="CDD" id="cd02204">
    <property type="entry name" value="PurL_repeat2"/>
    <property type="match status" value="1"/>
</dbReference>
<dbReference type="FunFam" id="3.30.1330.10:FF:000004">
    <property type="entry name" value="Phosphoribosylformylglycinamidine synthase subunit PurL"/>
    <property type="match status" value="1"/>
</dbReference>
<dbReference type="Gene3D" id="3.90.650.10">
    <property type="entry name" value="PurM-like C-terminal domain"/>
    <property type="match status" value="2"/>
</dbReference>
<dbReference type="Gene3D" id="3.30.1330.10">
    <property type="entry name" value="PurM-like, N-terminal domain"/>
    <property type="match status" value="2"/>
</dbReference>
<dbReference type="HAMAP" id="MF_00420">
    <property type="entry name" value="PurL_2"/>
    <property type="match status" value="1"/>
</dbReference>
<dbReference type="InterPro" id="IPR010074">
    <property type="entry name" value="PRibForGlyAmidine_synth_PurL"/>
</dbReference>
<dbReference type="InterPro" id="IPR041609">
    <property type="entry name" value="PurL_linker"/>
</dbReference>
<dbReference type="InterPro" id="IPR010918">
    <property type="entry name" value="PurM-like_C_dom"/>
</dbReference>
<dbReference type="InterPro" id="IPR036676">
    <property type="entry name" value="PurM-like_C_sf"/>
</dbReference>
<dbReference type="InterPro" id="IPR016188">
    <property type="entry name" value="PurM-like_N"/>
</dbReference>
<dbReference type="InterPro" id="IPR036921">
    <property type="entry name" value="PurM-like_N_sf"/>
</dbReference>
<dbReference type="NCBIfam" id="TIGR01736">
    <property type="entry name" value="FGAM_synth_II"/>
    <property type="match status" value="1"/>
</dbReference>
<dbReference type="NCBIfam" id="NF002290">
    <property type="entry name" value="PRK01213.1"/>
    <property type="match status" value="1"/>
</dbReference>
<dbReference type="PANTHER" id="PTHR43555">
    <property type="entry name" value="PHOSPHORIBOSYLFORMYLGLYCINAMIDINE SYNTHASE SUBUNIT PURL"/>
    <property type="match status" value="1"/>
</dbReference>
<dbReference type="PANTHER" id="PTHR43555:SF1">
    <property type="entry name" value="PHOSPHORIBOSYLFORMYLGLYCINAMIDINE SYNTHASE SUBUNIT PURL"/>
    <property type="match status" value="1"/>
</dbReference>
<dbReference type="Pfam" id="PF00586">
    <property type="entry name" value="AIRS"/>
    <property type="match status" value="2"/>
</dbReference>
<dbReference type="Pfam" id="PF02769">
    <property type="entry name" value="AIRS_C"/>
    <property type="match status" value="2"/>
</dbReference>
<dbReference type="Pfam" id="PF18072">
    <property type="entry name" value="FGAR-AT_linker"/>
    <property type="match status" value="1"/>
</dbReference>
<dbReference type="PIRSF" id="PIRSF001587">
    <property type="entry name" value="FGAM_synthase_II"/>
    <property type="match status" value="1"/>
</dbReference>
<dbReference type="SUPFAM" id="SSF56042">
    <property type="entry name" value="PurM C-terminal domain-like"/>
    <property type="match status" value="2"/>
</dbReference>
<dbReference type="SUPFAM" id="SSF55326">
    <property type="entry name" value="PurM N-terminal domain-like"/>
    <property type="match status" value="2"/>
</dbReference>
<keyword id="KW-0067">ATP-binding</keyword>
<keyword id="KW-0963">Cytoplasm</keyword>
<keyword id="KW-0436">Ligase</keyword>
<keyword id="KW-0460">Magnesium</keyword>
<keyword id="KW-0479">Metal-binding</keyword>
<keyword id="KW-0547">Nucleotide-binding</keyword>
<keyword id="KW-0658">Purine biosynthesis</keyword>
<keyword id="KW-1185">Reference proteome</keyword>
<sequence length="741" mass="79945">MKQALTPEQIKEQKPYLDWSLSEREYDYISEKLLGRLPNFTETGLFSAMWSEHCSYKKSKPVLRLFPNQNDRVLQGPGEGAGVVDIDDGQAVVFKAESHNHPSTVEPYQGAATGVGGILRDIFSMGARPIASLDSLHFGELDDPKMQMKVAGTVKGIGDYGNCMGIPTVAGETTFDPCYSGNLLVNAMSVGLMDQKDIQKGKAAGIGNAVMYVGAKTGRDGIHGATFASADFSDENATQRSAVQVGDPFMEKLLLEACLELIQNHPDWLVGIQDMGAAGIVSSSAEMASEGDAGMDLDLDLVPQREPNMSAYEIMLSESQERMLLCVNKGHEDDVKKIFDFYGLEAVTIGRITEGRQYVLHHDGQVVCDIPVSSLTDDVLEETSEEQKPARILQAEQEANWQPEVTDAGATLEQLLQQSTIADKSIFFEQYDSMVRTSTVVGPGSDAGVLRVRGTKKGLAMTTDGNGRFVYLNPEVGGKMALAEAAANIVATGALPLAITDCLNYGDPNDPEIFWELHQSVSGMAEACRVFDTPVISGNVSLYNENNGQAIHPTPMVGMVGLIKDLKNLVKMAAQAAGDQVYLLGQTGDDYAGSELQKMLTGDIAGTVADFDLNHVHAMMKTLLSLMEDGKVASAHDLAEGGLGVALAETLFKTDLGMNLKLDLTKNQLFSETAGRFVVTVKKEDAAAFEAALGDDATLIGEVTNSHWLQVRLADGNLNKNVADLEQLWKEAIPCQLKSRD</sequence>